<comment type="function">
    <text evidence="1">A GTPase-activating protein (GAP) that modifies Der/EngA GTPase function. May play a role in ribosome biogenesis.</text>
</comment>
<comment type="subunit">
    <text evidence="1">Interacts with Der.</text>
</comment>
<comment type="similarity">
    <text evidence="1">Belongs to the YihI family.</text>
</comment>
<keyword id="KW-0343">GTPase activation</keyword>
<keyword id="KW-0690">Ribosome biogenesis</keyword>
<organism>
    <name type="scientific">Vibrio vulnificus (strain YJ016)</name>
    <dbReference type="NCBI Taxonomy" id="196600"/>
    <lineage>
        <taxon>Bacteria</taxon>
        <taxon>Pseudomonadati</taxon>
        <taxon>Pseudomonadota</taxon>
        <taxon>Gammaproteobacteria</taxon>
        <taxon>Vibrionales</taxon>
        <taxon>Vibrionaceae</taxon>
        <taxon>Vibrio</taxon>
    </lineage>
</organism>
<gene>
    <name evidence="1" type="primary">yihI</name>
    <name type="ordered locus">VV0191</name>
</gene>
<feature type="chain" id="PRO_0000209598" description="Der GTPase-activating protein YihI">
    <location>
        <begin position="1"/>
        <end position="181"/>
    </location>
</feature>
<feature type="region of interest" description="Disordered" evidence="2">
    <location>
        <begin position="1"/>
        <end position="75"/>
    </location>
</feature>
<feature type="region of interest" description="Disordered" evidence="2">
    <location>
        <begin position="145"/>
        <end position="181"/>
    </location>
</feature>
<feature type="compositionally biased region" description="Basic residues" evidence="2">
    <location>
        <begin position="32"/>
        <end position="43"/>
    </location>
</feature>
<feature type="compositionally biased region" description="Acidic residues" evidence="2">
    <location>
        <begin position="146"/>
        <end position="155"/>
    </location>
</feature>
<feature type="compositionally biased region" description="Basic and acidic residues" evidence="2">
    <location>
        <begin position="156"/>
        <end position="165"/>
    </location>
</feature>
<feature type="compositionally biased region" description="Acidic residues" evidence="2">
    <location>
        <begin position="166"/>
        <end position="181"/>
    </location>
</feature>
<sequence length="181" mass="20554">MSRKKKSRKPGAAGAPEFMVTRNRSESDVAGRLRKKDKKRKGLKAGGRNSEEGAQQKHGSSQVRDPRLGSKKKIPLIVEPAKKLTKQERRLSAEQELEMLENDAKLNVLLDRIESGENLGRGLQQYVDEKLDRIEQLMSQLGLLEPEAEEEFEDEAPVRKSRSDDDLLADFEDFDMDDYKG</sequence>
<evidence type="ECO:0000255" key="1">
    <source>
        <dbReference type="HAMAP-Rule" id="MF_01058"/>
    </source>
</evidence>
<evidence type="ECO:0000256" key="2">
    <source>
        <dbReference type="SAM" id="MobiDB-lite"/>
    </source>
</evidence>
<accession>Q7MQ19</accession>
<name>YIHI_VIBVY</name>
<protein>
    <recommendedName>
        <fullName evidence="1">Der GTPase-activating protein YihI</fullName>
    </recommendedName>
</protein>
<reference key="1">
    <citation type="journal article" date="2003" name="Genome Res.">
        <title>Comparative genome analysis of Vibrio vulnificus, a marine pathogen.</title>
        <authorList>
            <person name="Chen C.-Y."/>
            <person name="Wu K.-M."/>
            <person name="Chang Y.-C."/>
            <person name="Chang C.-H."/>
            <person name="Tsai H.-C."/>
            <person name="Liao T.-L."/>
            <person name="Liu Y.-M."/>
            <person name="Chen H.-J."/>
            <person name="Shen A.B.-T."/>
            <person name="Li J.-C."/>
            <person name="Su T.-L."/>
            <person name="Shao C.-P."/>
            <person name="Lee C.-T."/>
            <person name="Hor L.-I."/>
            <person name="Tsai S.-F."/>
        </authorList>
    </citation>
    <scope>NUCLEOTIDE SEQUENCE [LARGE SCALE GENOMIC DNA]</scope>
    <source>
        <strain>YJ016</strain>
    </source>
</reference>
<dbReference type="EMBL" id="BA000037">
    <property type="protein sequence ID" value="BAC92955.1"/>
    <property type="molecule type" value="Genomic_DNA"/>
</dbReference>
<dbReference type="RefSeq" id="WP_011149190.1">
    <property type="nucleotide sequence ID" value="NC_005139.1"/>
</dbReference>
<dbReference type="SMR" id="Q7MQ19"/>
<dbReference type="STRING" id="672.VV93_v1c01770"/>
<dbReference type="KEGG" id="vvy:VV0191"/>
<dbReference type="eggNOG" id="COG3078">
    <property type="taxonomic scope" value="Bacteria"/>
</dbReference>
<dbReference type="HOGENOM" id="CLU_094104_1_0_6"/>
<dbReference type="Proteomes" id="UP000002675">
    <property type="component" value="Chromosome I"/>
</dbReference>
<dbReference type="GO" id="GO:0005096">
    <property type="term" value="F:GTPase activator activity"/>
    <property type="evidence" value="ECO:0007669"/>
    <property type="project" value="UniProtKB-KW"/>
</dbReference>
<dbReference type="GO" id="GO:0042254">
    <property type="term" value="P:ribosome biogenesis"/>
    <property type="evidence" value="ECO:0007669"/>
    <property type="project" value="UniProtKB-KW"/>
</dbReference>
<dbReference type="HAMAP" id="MF_01058">
    <property type="entry name" value="GAP_YihI"/>
    <property type="match status" value="1"/>
</dbReference>
<dbReference type="InterPro" id="IPR007336">
    <property type="entry name" value="YihI"/>
</dbReference>
<dbReference type="NCBIfam" id="NF003560">
    <property type="entry name" value="PRK05244.1-1"/>
    <property type="match status" value="1"/>
</dbReference>
<dbReference type="Pfam" id="PF04220">
    <property type="entry name" value="YihI"/>
    <property type="match status" value="1"/>
</dbReference>
<proteinExistence type="inferred from homology"/>